<reference key="1">
    <citation type="journal article" date="2007" name="J. Bacteriol.">
        <title>The complete genome sequence of Bacillus thuringiensis Al Hakam.</title>
        <authorList>
            <person name="Challacombe J.F."/>
            <person name="Altherr M.R."/>
            <person name="Xie G."/>
            <person name="Bhotika S.S."/>
            <person name="Brown N."/>
            <person name="Bruce D."/>
            <person name="Campbell C.S."/>
            <person name="Campbell M.L."/>
            <person name="Chen J."/>
            <person name="Chertkov O."/>
            <person name="Cleland C."/>
            <person name="Dimitrijevic M."/>
            <person name="Doggett N.A."/>
            <person name="Fawcett J.J."/>
            <person name="Glavina T."/>
            <person name="Goodwin L.A."/>
            <person name="Green L.D."/>
            <person name="Han C.S."/>
            <person name="Hill K.K."/>
            <person name="Hitchcock P."/>
            <person name="Jackson P.J."/>
            <person name="Keim P."/>
            <person name="Kewalramani A.R."/>
            <person name="Longmire J."/>
            <person name="Lucas S."/>
            <person name="Malfatti S."/>
            <person name="Martinez D."/>
            <person name="McMurry K."/>
            <person name="Meincke L.J."/>
            <person name="Misra M."/>
            <person name="Moseman B.L."/>
            <person name="Mundt M."/>
            <person name="Munk A.C."/>
            <person name="Okinaka R.T."/>
            <person name="Parson-Quintana B."/>
            <person name="Reilly L.P."/>
            <person name="Richardson P."/>
            <person name="Robinson D.L."/>
            <person name="Saunders E."/>
            <person name="Tapia R."/>
            <person name="Tesmer J.G."/>
            <person name="Thayer N."/>
            <person name="Thompson L.S."/>
            <person name="Tice H."/>
            <person name="Ticknor L.O."/>
            <person name="Wills P.L."/>
            <person name="Gilna P."/>
            <person name="Brettin T.S."/>
        </authorList>
    </citation>
    <scope>NUCLEOTIDE SEQUENCE [LARGE SCALE GENOMIC DNA]</scope>
    <source>
        <strain>Al Hakam</strain>
    </source>
</reference>
<protein>
    <recommendedName>
        <fullName evidence="1">UPF0738 protein BALH_1059</fullName>
    </recommendedName>
</protein>
<name>Y1059_BACAH</name>
<dbReference type="EMBL" id="CP000485">
    <property type="protein sequence ID" value="ABK84420.1"/>
    <property type="molecule type" value="Genomic_DNA"/>
</dbReference>
<dbReference type="RefSeq" id="WP_001180009.1">
    <property type="nucleotide sequence ID" value="NC_008600.1"/>
</dbReference>
<dbReference type="KEGG" id="btl:BALH_1059"/>
<dbReference type="HOGENOM" id="CLU_142282_0_0_9"/>
<dbReference type="HAMAP" id="MF_01861">
    <property type="entry name" value="UPF0738"/>
    <property type="match status" value="1"/>
</dbReference>
<dbReference type="InterPro" id="IPR020908">
    <property type="entry name" value="UPF0738"/>
</dbReference>
<dbReference type="Pfam" id="PF19785">
    <property type="entry name" value="UPF0738"/>
    <property type="match status" value="1"/>
</dbReference>
<organism>
    <name type="scientific">Bacillus thuringiensis (strain Al Hakam)</name>
    <dbReference type="NCBI Taxonomy" id="412694"/>
    <lineage>
        <taxon>Bacteria</taxon>
        <taxon>Bacillati</taxon>
        <taxon>Bacillota</taxon>
        <taxon>Bacilli</taxon>
        <taxon>Bacillales</taxon>
        <taxon>Bacillaceae</taxon>
        <taxon>Bacillus</taxon>
        <taxon>Bacillus cereus group</taxon>
    </lineage>
</organism>
<gene>
    <name type="ordered locus">BALH_1059</name>
</gene>
<accession>A0RB27</accession>
<comment type="similarity">
    <text evidence="1">Belongs to the UPF0738 family.</text>
</comment>
<sequence length="123" mass="14131">MQNKIQVKSVEKRENALIFCAENSEIEVKGLSARNHVLVDSDNLSFLYILENESSFIYVSIPHTCWEAMHEAMNNDVVMFVRVNDIEMELEGLKEEVEYLVENIEGNANYGEELVTAVEKVFL</sequence>
<proteinExistence type="inferred from homology"/>
<feature type="chain" id="PRO_0000369651" description="UPF0738 protein BALH_1059">
    <location>
        <begin position="1"/>
        <end position="123"/>
    </location>
</feature>
<evidence type="ECO:0000255" key="1">
    <source>
        <dbReference type="HAMAP-Rule" id="MF_01861"/>
    </source>
</evidence>